<evidence type="ECO:0000255" key="1">
    <source>
        <dbReference type="HAMAP-Rule" id="MF_00121"/>
    </source>
</evidence>
<name>GATB_MYCSK</name>
<organism>
    <name type="scientific">Mycobacterium sp. (strain KMS)</name>
    <dbReference type="NCBI Taxonomy" id="189918"/>
    <lineage>
        <taxon>Bacteria</taxon>
        <taxon>Bacillati</taxon>
        <taxon>Actinomycetota</taxon>
        <taxon>Actinomycetes</taxon>
        <taxon>Mycobacteriales</taxon>
        <taxon>Mycobacteriaceae</taxon>
        <taxon>Mycobacterium</taxon>
    </lineage>
</organism>
<reference key="1">
    <citation type="submission" date="2006-12" db="EMBL/GenBank/DDBJ databases">
        <title>Complete sequence of chromosome of Mycobacterium sp. KMS.</title>
        <authorList>
            <consortium name="US DOE Joint Genome Institute"/>
            <person name="Copeland A."/>
            <person name="Lucas S."/>
            <person name="Lapidus A."/>
            <person name="Barry K."/>
            <person name="Detter J.C."/>
            <person name="Glavina del Rio T."/>
            <person name="Hammon N."/>
            <person name="Israni S."/>
            <person name="Dalin E."/>
            <person name="Tice H."/>
            <person name="Pitluck S."/>
            <person name="Kiss H."/>
            <person name="Brettin T."/>
            <person name="Bruce D."/>
            <person name="Han C."/>
            <person name="Tapia R."/>
            <person name="Gilna P."/>
            <person name="Schmutz J."/>
            <person name="Larimer F."/>
            <person name="Land M."/>
            <person name="Hauser L."/>
            <person name="Kyrpides N."/>
            <person name="Mikhailova N."/>
            <person name="Miller C.D."/>
            <person name="Richardson P."/>
        </authorList>
    </citation>
    <scope>NUCLEOTIDE SEQUENCE [LARGE SCALE GENOMIC DNA]</scope>
    <source>
        <strain>KMS</strain>
    </source>
</reference>
<gene>
    <name evidence="1" type="primary">gatB</name>
    <name type="ordered locus">Mkms_1940</name>
</gene>
<dbReference type="EC" id="6.3.5.-" evidence="1"/>
<dbReference type="EMBL" id="CP000518">
    <property type="protein sequence ID" value="ABL91139.1"/>
    <property type="molecule type" value="Genomic_DNA"/>
</dbReference>
<dbReference type="SMR" id="A1UE81"/>
<dbReference type="STRING" id="189918.Mkms_1940"/>
<dbReference type="KEGG" id="mkm:Mkms_1940"/>
<dbReference type="HOGENOM" id="CLU_019240_0_0_11"/>
<dbReference type="OrthoDB" id="9804078at2"/>
<dbReference type="GO" id="GO:0050566">
    <property type="term" value="F:asparaginyl-tRNA synthase (glutamine-hydrolyzing) activity"/>
    <property type="evidence" value="ECO:0007669"/>
    <property type="project" value="RHEA"/>
</dbReference>
<dbReference type="GO" id="GO:0005524">
    <property type="term" value="F:ATP binding"/>
    <property type="evidence" value="ECO:0007669"/>
    <property type="project" value="UniProtKB-KW"/>
</dbReference>
<dbReference type="GO" id="GO:0050567">
    <property type="term" value="F:glutaminyl-tRNA synthase (glutamine-hydrolyzing) activity"/>
    <property type="evidence" value="ECO:0007669"/>
    <property type="project" value="UniProtKB-UniRule"/>
</dbReference>
<dbReference type="GO" id="GO:0070681">
    <property type="term" value="P:glutaminyl-tRNAGln biosynthesis via transamidation"/>
    <property type="evidence" value="ECO:0007669"/>
    <property type="project" value="TreeGrafter"/>
</dbReference>
<dbReference type="GO" id="GO:0006412">
    <property type="term" value="P:translation"/>
    <property type="evidence" value="ECO:0007669"/>
    <property type="project" value="UniProtKB-UniRule"/>
</dbReference>
<dbReference type="FunFam" id="1.10.10.410:FF:000002">
    <property type="entry name" value="Aspartyl/glutamyl-tRNA(Asn/Gln) amidotransferase subunit B"/>
    <property type="match status" value="1"/>
</dbReference>
<dbReference type="Gene3D" id="1.10.10.410">
    <property type="match status" value="1"/>
</dbReference>
<dbReference type="HAMAP" id="MF_00121">
    <property type="entry name" value="GatB"/>
    <property type="match status" value="1"/>
</dbReference>
<dbReference type="InterPro" id="IPR017959">
    <property type="entry name" value="Asn/Gln-tRNA_amidoTrfase_suB/E"/>
</dbReference>
<dbReference type="InterPro" id="IPR006075">
    <property type="entry name" value="Asn/Gln-tRNA_Trfase_suB/E_cat"/>
</dbReference>
<dbReference type="InterPro" id="IPR018027">
    <property type="entry name" value="Asn/Gln_amidotransferase"/>
</dbReference>
<dbReference type="InterPro" id="IPR003789">
    <property type="entry name" value="Asn/Gln_tRNA_amidoTrase-B-like"/>
</dbReference>
<dbReference type="InterPro" id="IPR004413">
    <property type="entry name" value="GatB"/>
</dbReference>
<dbReference type="InterPro" id="IPR023168">
    <property type="entry name" value="GatB_Yqey_C_2"/>
</dbReference>
<dbReference type="InterPro" id="IPR017958">
    <property type="entry name" value="Gln-tRNA_amidoTrfase_suB_CS"/>
</dbReference>
<dbReference type="InterPro" id="IPR014746">
    <property type="entry name" value="Gln_synth/guanido_kin_cat_dom"/>
</dbReference>
<dbReference type="NCBIfam" id="TIGR00133">
    <property type="entry name" value="gatB"/>
    <property type="match status" value="1"/>
</dbReference>
<dbReference type="NCBIfam" id="NF004012">
    <property type="entry name" value="PRK05477.1-2"/>
    <property type="match status" value="1"/>
</dbReference>
<dbReference type="NCBIfam" id="NF004013">
    <property type="entry name" value="PRK05477.1-3"/>
    <property type="match status" value="1"/>
</dbReference>
<dbReference type="NCBIfam" id="NF004014">
    <property type="entry name" value="PRK05477.1-4"/>
    <property type="match status" value="1"/>
</dbReference>
<dbReference type="PANTHER" id="PTHR11659">
    <property type="entry name" value="GLUTAMYL-TRNA GLN AMIDOTRANSFERASE SUBUNIT B MITOCHONDRIAL AND PROKARYOTIC PET112-RELATED"/>
    <property type="match status" value="1"/>
</dbReference>
<dbReference type="PANTHER" id="PTHR11659:SF0">
    <property type="entry name" value="GLUTAMYL-TRNA(GLN) AMIDOTRANSFERASE SUBUNIT B, MITOCHONDRIAL"/>
    <property type="match status" value="1"/>
</dbReference>
<dbReference type="Pfam" id="PF02934">
    <property type="entry name" value="GatB_N"/>
    <property type="match status" value="1"/>
</dbReference>
<dbReference type="Pfam" id="PF02637">
    <property type="entry name" value="GatB_Yqey"/>
    <property type="match status" value="1"/>
</dbReference>
<dbReference type="SMART" id="SM00845">
    <property type="entry name" value="GatB_Yqey"/>
    <property type="match status" value="1"/>
</dbReference>
<dbReference type="SUPFAM" id="SSF89095">
    <property type="entry name" value="GatB/YqeY motif"/>
    <property type="match status" value="1"/>
</dbReference>
<dbReference type="SUPFAM" id="SSF55931">
    <property type="entry name" value="Glutamine synthetase/guanido kinase"/>
    <property type="match status" value="1"/>
</dbReference>
<dbReference type="PROSITE" id="PS01234">
    <property type="entry name" value="GATB"/>
    <property type="match status" value="1"/>
</dbReference>
<comment type="function">
    <text evidence="1">Allows the formation of correctly charged Asn-tRNA(Asn) or Gln-tRNA(Gln) through the transamidation of misacylated Asp-tRNA(Asn) or Glu-tRNA(Gln) in organisms which lack either or both of asparaginyl-tRNA or glutaminyl-tRNA synthetases. The reaction takes place in the presence of glutamine and ATP through an activated phospho-Asp-tRNA(Asn) or phospho-Glu-tRNA(Gln).</text>
</comment>
<comment type="catalytic activity">
    <reaction evidence="1">
        <text>L-glutamyl-tRNA(Gln) + L-glutamine + ATP + H2O = L-glutaminyl-tRNA(Gln) + L-glutamate + ADP + phosphate + H(+)</text>
        <dbReference type="Rhea" id="RHEA:17521"/>
        <dbReference type="Rhea" id="RHEA-COMP:9681"/>
        <dbReference type="Rhea" id="RHEA-COMP:9684"/>
        <dbReference type="ChEBI" id="CHEBI:15377"/>
        <dbReference type="ChEBI" id="CHEBI:15378"/>
        <dbReference type="ChEBI" id="CHEBI:29985"/>
        <dbReference type="ChEBI" id="CHEBI:30616"/>
        <dbReference type="ChEBI" id="CHEBI:43474"/>
        <dbReference type="ChEBI" id="CHEBI:58359"/>
        <dbReference type="ChEBI" id="CHEBI:78520"/>
        <dbReference type="ChEBI" id="CHEBI:78521"/>
        <dbReference type="ChEBI" id="CHEBI:456216"/>
    </reaction>
</comment>
<comment type="catalytic activity">
    <reaction evidence="1">
        <text>L-aspartyl-tRNA(Asn) + L-glutamine + ATP + H2O = L-asparaginyl-tRNA(Asn) + L-glutamate + ADP + phosphate + 2 H(+)</text>
        <dbReference type="Rhea" id="RHEA:14513"/>
        <dbReference type="Rhea" id="RHEA-COMP:9674"/>
        <dbReference type="Rhea" id="RHEA-COMP:9677"/>
        <dbReference type="ChEBI" id="CHEBI:15377"/>
        <dbReference type="ChEBI" id="CHEBI:15378"/>
        <dbReference type="ChEBI" id="CHEBI:29985"/>
        <dbReference type="ChEBI" id="CHEBI:30616"/>
        <dbReference type="ChEBI" id="CHEBI:43474"/>
        <dbReference type="ChEBI" id="CHEBI:58359"/>
        <dbReference type="ChEBI" id="CHEBI:78515"/>
        <dbReference type="ChEBI" id="CHEBI:78516"/>
        <dbReference type="ChEBI" id="CHEBI:456216"/>
    </reaction>
</comment>
<comment type="subunit">
    <text evidence="1">Heterotrimer of A, B and C subunits.</text>
</comment>
<comment type="similarity">
    <text evidence="1">Belongs to the GatB/GatE family. GatB subfamily.</text>
</comment>
<proteinExistence type="inferred from homology"/>
<feature type="chain" id="PRO_1000016003" description="Aspartyl/glutamyl-tRNA(Asn/Gln) amidotransferase subunit B">
    <location>
        <begin position="1"/>
        <end position="501"/>
    </location>
</feature>
<sequence>MTATSAAELLDYDDVVARFEPVMGMEVHVELSTATKMFCGCANAFGAEPNTQVCPVCLGLPGSLPVLNQQAVESAIRIGLALNCEIVPWCRFARKNYFYPDQPKNYQISQYDEPIAINGYLDVPLDDGSTWRVEIERAHMEEDTGKLTHLGSDTGRIAGATNSLADYNRAGVPLIEIVTRPIEGAGVKAPEIARAYVTALRDLLRALGVSDVRMDQGSMRCDANLSLKPIGQAEFGTRTETKNVNSLKSVEVAVRYEMRRQAAVLTSGGQVHQETRHFHEDGYTSPGRSKETAEDYRYFPEPDLEPVAPDAEFVEHLRQSLPELPWLRRNRIQQEWGISDEVMRDLVNNGAIDLVAATVEQGASSEAARAWWGNFLVQKANESGVELDALPITPAQVAAVVKLVDDGKLSNKLARQVVEGVLAGEGEPAQVMADRGLEVVRDDSALQAAVDEALAANPGIVEKIRGGKVQAAGAIVGAVMKATKGQADAARVRELVLAACS</sequence>
<accession>A1UE81</accession>
<protein>
    <recommendedName>
        <fullName evidence="1">Aspartyl/glutamyl-tRNA(Asn/Gln) amidotransferase subunit B</fullName>
        <shortName evidence="1">Asp/Glu-ADT subunit B</shortName>
        <ecNumber evidence="1">6.3.5.-</ecNumber>
    </recommendedName>
</protein>
<keyword id="KW-0067">ATP-binding</keyword>
<keyword id="KW-0436">Ligase</keyword>
<keyword id="KW-0547">Nucleotide-binding</keyword>
<keyword id="KW-0648">Protein biosynthesis</keyword>